<protein>
    <recommendedName>
        <fullName evidence="1">Aspartyl/glutamyl-tRNA(Asn/Gln) amidotransferase subunit C</fullName>
        <shortName evidence="1">Asp/Glu-ADT subunit C</shortName>
        <ecNumber evidence="1">6.3.5.-</ecNumber>
    </recommendedName>
</protein>
<gene>
    <name evidence="1" type="primary">gatC</name>
    <name type="ordered locus">P9515_02671</name>
</gene>
<feature type="chain" id="PRO_1000016174" description="Aspartyl/glutamyl-tRNA(Asn/Gln) amidotransferase subunit C">
    <location>
        <begin position="1"/>
        <end position="97"/>
    </location>
</feature>
<evidence type="ECO:0000255" key="1">
    <source>
        <dbReference type="HAMAP-Rule" id="MF_00122"/>
    </source>
</evidence>
<name>GATC_PROM5</name>
<reference key="1">
    <citation type="journal article" date="2007" name="PLoS Genet.">
        <title>Patterns and implications of gene gain and loss in the evolution of Prochlorococcus.</title>
        <authorList>
            <person name="Kettler G.C."/>
            <person name="Martiny A.C."/>
            <person name="Huang K."/>
            <person name="Zucker J."/>
            <person name="Coleman M.L."/>
            <person name="Rodrigue S."/>
            <person name="Chen F."/>
            <person name="Lapidus A."/>
            <person name="Ferriera S."/>
            <person name="Johnson J."/>
            <person name="Steglich C."/>
            <person name="Church G.M."/>
            <person name="Richardson P."/>
            <person name="Chisholm S.W."/>
        </authorList>
    </citation>
    <scope>NUCLEOTIDE SEQUENCE [LARGE SCALE GENOMIC DNA]</scope>
    <source>
        <strain>MIT 9515</strain>
    </source>
</reference>
<comment type="function">
    <text evidence="1">Allows the formation of correctly charged Asn-tRNA(Asn) or Gln-tRNA(Gln) through the transamidation of misacylated Asp-tRNA(Asn) or Glu-tRNA(Gln) in organisms which lack either or both of asparaginyl-tRNA or glutaminyl-tRNA synthetases. The reaction takes place in the presence of glutamine and ATP through an activated phospho-Asp-tRNA(Asn) or phospho-Glu-tRNA(Gln).</text>
</comment>
<comment type="catalytic activity">
    <reaction evidence="1">
        <text>L-glutamyl-tRNA(Gln) + L-glutamine + ATP + H2O = L-glutaminyl-tRNA(Gln) + L-glutamate + ADP + phosphate + H(+)</text>
        <dbReference type="Rhea" id="RHEA:17521"/>
        <dbReference type="Rhea" id="RHEA-COMP:9681"/>
        <dbReference type="Rhea" id="RHEA-COMP:9684"/>
        <dbReference type="ChEBI" id="CHEBI:15377"/>
        <dbReference type="ChEBI" id="CHEBI:15378"/>
        <dbReference type="ChEBI" id="CHEBI:29985"/>
        <dbReference type="ChEBI" id="CHEBI:30616"/>
        <dbReference type="ChEBI" id="CHEBI:43474"/>
        <dbReference type="ChEBI" id="CHEBI:58359"/>
        <dbReference type="ChEBI" id="CHEBI:78520"/>
        <dbReference type="ChEBI" id="CHEBI:78521"/>
        <dbReference type="ChEBI" id="CHEBI:456216"/>
    </reaction>
</comment>
<comment type="catalytic activity">
    <reaction evidence="1">
        <text>L-aspartyl-tRNA(Asn) + L-glutamine + ATP + H2O = L-asparaginyl-tRNA(Asn) + L-glutamate + ADP + phosphate + 2 H(+)</text>
        <dbReference type="Rhea" id="RHEA:14513"/>
        <dbReference type="Rhea" id="RHEA-COMP:9674"/>
        <dbReference type="Rhea" id="RHEA-COMP:9677"/>
        <dbReference type="ChEBI" id="CHEBI:15377"/>
        <dbReference type="ChEBI" id="CHEBI:15378"/>
        <dbReference type="ChEBI" id="CHEBI:29985"/>
        <dbReference type="ChEBI" id="CHEBI:30616"/>
        <dbReference type="ChEBI" id="CHEBI:43474"/>
        <dbReference type="ChEBI" id="CHEBI:58359"/>
        <dbReference type="ChEBI" id="CHEBI:78515"/>
        <dbReference type="ChEBI" id="CHEBI:78516"/>
        <dbReference type="ChEBI" id="CHEBI:456216"/>
    </reaction>
</comment>
<comment type="subunit">
    <text evidence="1">Heterotrimer of A, B and C subunits.</text>
</comment>
<comment type="similarity">
    <text evidence="1">Belongs to the GatC family.</text>
</comment>
<organism>
    <name type="scientific">Prochlorococcus marinus (strain MIT 9515)</name>
    <dbReference type="NCBI Taxonomy" id="167542"/>
    <lineage>
        <taxon>Bacteria</taxon>
        <taxon>Bacillati</taxon>
        <taxon>Cyanobacteriota</taxon>
        <taxon>Cyanophyceae</taxon>
        <taxon>Synechococcales</taxon>
        <taxon>Prochlorococcaceae</taxon>
        <taxon>Prochlorococcus</taxon>
    </lineage>
</organism>
<accession>A2BUL5</accession>
<keyword id="KW-0067">ATP-binding</keyword>
<keyword id="KW-0436">Ligase</keyword>
<keyword id="KW-0547">Nucleotide-binding</keyword>
<keyword id="KW-0648">Protein biosynthesis</keyword>
<dbReference type="EC" id="6.3.5.-" evidence="1"/>
<dbReference type="EMBL" id="CP000552">
    <property type="protein sequence ID" value="ABM71476.1"/>
    <property type="molecule type" value="Genomic_DNA"/>
</dbReference>
<dbReference type="RefSeq" id="WP_011819588.1">
    <property type="nucleotide sequence ID" value="NC_008817.1"/>
</dbReference>
<dbReference type="SMR" id="A2BUL5"/>
<dbReference type="STRING" id="167542.P9515_02671"/>
<dbReference type="GeneID" id="60200861"/>
<dbReference type="KEGG" id="pmc:P9515_02671"/>
<dbReference type="eggNOG" id="COG0721">
    <property type="taxonomic scope" value="Bacteria"/>
</dbReference>
<dbReference type="HOGENOM" id="CLU_105899_1_2_3"/>
<dbReference type="OrthoDB" id="9813938at2"/>
<dbReference type="Proteomes" id="UP000001589">
    <property type="component" value="Chromosome"/>
</dbReference>
<dbReference type="GO" id="GO:0050566">
    <property type="term" value="F:asparaginyl-tRNA synthase (glutamine-hydrolyzing) activity"/>
    <property type="evidence" value="ECO:0007669"/>
    <property type="project" value="RHEA"/>
</dbReference>
<dbReference type="GO" id="GO:0005524">
    <property type="term" value="F:ATP binding"/>
    <property type="evidence" value="ECO:0007669"/>
    <property type="project" value="UniProtKB-KW"/>
</dbReference>
<dbReference type="GO" id="GO:0050567">
    <property type="term" value="F:glutaminyl-tRNA synthase (glutamine-hydrolyzing) activity"/>
    <property type="evidence" value="ECO:0007669"/>
    <property type="project" value="UniProtKB-UniRule"/>
</dbReference>
<dbReference type="GO" id="GO:0070681">
    <property type="term" value="P:glutaminyl-tRNAGln biosynthesis via transamidation"/>
    <property type="evidence" value="ECO:0007669"/>
    <property type="project" value="TreeGrafter"/>
</dbReference>
<dbReference type="GO" id="GO:0006450">
    <property type="term" value="P:regulation of translational fidelity"/>
    <property type="evidence" value="ECO:0007669"/>
    <property type="project" value="InterPro"/>
</dbReference>
<dbReference type="GO" id="GO:0006412">
    <property type="term" value="P:translation"/>
    <property type="evidence" value="ECO:0007669"/>
    <property type="project" value="UniProtKB-UniRule"/>
</dbReference>
<dbReference type="Gene3D" id="1.10.20.60">
    <property type="entry name" value="Glu-tRNAGln amidotransferase C subunit, N-terminal domain"/>
    <property type="match status" value="1"/>
</dbReference>
<dbReference type="HAMAP" id="MF_00122">
    <property type="entry name" value="GatC"/>
    <property type="match status" value="1"/>
</dbReference>
<dbReference type="InterPro" id="IPR036113">
    <property type="entry name" value="Asp/Glu-ADT_sf_sub_c"/>
</dbReference>
<dbReference type="InterPro" id="IPR003837">
    <property type="entry name" value="GatC"/>
</dbReference>
<dbReference type="NCBIfam" id="TIGR00135">
    <property type="entry name" value="gatC"/>
    <property type="match status" value="1"/>
</dbReference>
<dbReference type="PANTHER" id="PTHR15004">
    <property type="entry name" value="GLUTAMYL-TRNA(GLN) AMIDOTRANSFERASE SUBUNIT C, MITOCHONDRIAL"/>
    <property type="match status" value="1"/>
</dbReference>
<dbReference type="PANTHER" id="PTHR15004:SF0">
    <property type="entry name" value="GLUTAMYL-TRNA(GLN) AMIDOTRANSFERASE SUBUNIT C, MITOCHONDRIAL"/>
    <property type="match status" value="1"/>
</dbReference>
<dbReference type="Pfam" id="PF02686">
    <property type="entry name" value="GatC"/>
    <property type="match status" value="1"/>
</dbReference>
<dbReference type="SUPFAM" id="SSF141000">
    <property type="entry name" value="Glu-tRNAGln amidotransferase C subunit"/>
    <property type="match status" value="1"/>
</dbReference>
<proteinExistence type="inferred from homology"/>
<sequence>MKRISSDEVKKVAELARLELNENEIHQHAEQLEKILEYIKQLEKINTENIACTTRAIEVVNVLRKDERRDYENSDELLDLAPSRENKFFKVPKIINE</sequence>